<accession>P67581</accession>
<accession>Q97RL6</accession>
<organism>
    <name type="scientific">Streptococcus pneumoniae (strain ATCC BAA-255 / R6)</name>
    <dbReference type="NCBI Taxonomy" id="171101"/>
    <lineage>
        <taxon>Bacteria</taxon>
        <taxon>Bacillati</taxon>
        <taxon>Bacillota</taxon>
        <taxon>Bacilli</taxon>
        <taxon>Lactobacillales</taxon>
        <taxon>Streptococcaceae</taxon>
        <taxon>Streptococcus</taxon>
    </lineage>
</organism>
<proteinExistence type="inferred from homology"/>
<feature type="chain" id="PRO_0000139251" description="Methionine--tRNA ligase">
    <location>
        <begin position="1"/>
        <end position="665"/>
    </location>
</feature>
<feature type="domain" description="tRNA-binding">
    <location>
        <begin position="562"/>
        <end position="665"/>
    </location>
</feature>
<feature type="short sequence motif" description="'HIGH' region">
    <location>
        <begin position="13"/>
        <end position="23"/>
    </location>
</feature>
<feature type="short sequence motif" description="'KMSKS' region">
    <location>
        <begin position="309"/>
        <end position="313"/>
    </location>
</feature>
<feature type="binding site" evidence="1">
    <location>
        <position position="312"/>
    </location>
    <ligand>
        <name>ATP</name>
        <dbReference type="ChEBI" id="CHEBI:30616"/>
    </ligand>
</feature>
<dbReference type="EC" id="6.1.1.10"/>
<dbReference type="EMBL" id="AE007317">
    <property type="protein sequence ID" value="AAK99500.1"/>
    <property type="status" value="ALT_INIT"/>
    <property type="molecule type" value="Genomic_DNA"/>
</dbReference>
<dbReference type="PIR" id="H97958">
    <property type="entry name" value="H97958"/>
</dbReference>
<dbReference type="RefSeq" id="NP_358290.2">
    <property type="nucleotide sequence ID" value="NC_003098.1"/>
</dbReference>
<dbReference type="RefSeq" id="WP_001291370.1">
    <property type="nucleotide sequence ID" value="NC_003098.1"/>
</dbReference>
<dbReference type="SMR" id="P67581"/>
<dbReference type="STRING" id="171101.spr0696"/>
<dbReference type="KEGG" id="spr:spr0696"/>
<dbReference type="PATRIC" id="fig|171101.6.peg.771"/>
<dbReference type="eggNOG" id="COG0073">
    <property type="taxonomic scope" value="Bacteria"/>
</dbReference>
<dbReference type="eggNOG" id="COG0143">
    <property type="taxonomic scope" value="Bacteria"/>
</dbReference>
<dbReference type="HOGENOM" id="CLU_009710_9_4_9"/>
<dbReference type="Proteomes" id="UP000000586">
    <property type="component" value="Chromosome"/>
</dbReference>
<dbReference type="GO" id="GO:0005737">
    <property type="term" value="C:cytoplasm"/>
    <property type="evidence" value="ECO:0007669"/>
    <property type="project" value="UniProtKB-SubCell"/>
</dbReference>
<dbReference type="GO" id="GO:0005524">
    <property type="term" value="F:ATP binding"/>
    <property type="evidence" value="ECO:0007669"/>
    <property type="project" value="UniProtKB-UniRule"/>
</dbReference>
<dbReference type="GO" id="GO:0004825">
    <property type="term" value="F:methionine-tRNA ligase activity"/>
    <property type="evidence" value="ECO:0000318"/>
    <property type="project" value="GO_Central"/>
</dbReference>
<dbReference type="GO" id="GO:0000049">
    <property type="term" value="F:tRNA binding"/>
    <property type="evidence" value="ECO:0007669"/>
    <property type="project" value="UniProtKB-KW"/>
</dbReference>
<dbReference type="GO" id="GO:0006431">
    <property type="term" value="P:methionyl-tRNA aminoacylation"/>
    <property type="evidence" value="ECO:0000318"/>
    <property type="project" value="GO_Central"/>
</dbReference>
<dbReference type="CDD" id="cd07957">
    <property type="entry name" value="Anticodon_Ia_Met"/>
    <property type="match status" value="1"/>
</dbReference>
<dbReference type="CDD" id="cd00814">
    <property type="entry name" value="MetRS_core"/>
    <property type="match status" value="1"/>
</dbReference>
<dbReference type="CDD" id="cd02800">
    <property type="entry name" value="tRNA_bind_EcMetRS_like"/>
    <property type="match status" value="1"/>
</dbReference>
<dbReference type="FunFam" id="1.10.730.10:FF:000026">
    <property type="entry name" value="Methionine--tRNA ligase"/>
    <property type="match status" value="1"/>
</dbReference>
<dbReference type="FunFam" id="2.170.220.10:FF:000002">
    <property type="entry name" value="Methionine--tRNA ligase"/>
    <property type="match status" value="1"/>
</dbReference>
<dbReference type="FunFam" id="2.40.50.140:FF:000042">
    <property type="entry name" value="Methionine--tRNA ligase"/>
    <property type="match status" value="1"/>
</dbReference>
<dbReference type="Gene3D" id="2.170.220.10">
    <property type="match status" value="1"/>
</dbReference>
<dbReference type="Gene3D" id="3.40.50.620">
    <property type="entry name" value="HUPs"/>
    <property type="match status" value="1"/>
</dbReference>
<dbReference type="Gene3D" id="1.10.730.10">
    <property type="entry name" value="Isoleucyl-tRNA Synthetase, Domain 1"/>
    <property type="match status" value="1"/>
</dbReference>
<dbReference type="Gene3D" id="2.40.50.140">
    <property type="entry name" value="Nucleic acid-binding proteins"/>
    <property type="match status" value="1"/>
</dbReference>
<dbReference type="HAMAP" id="MF_01228">
    <property type="entry name" value="Met_tRNA_synth_type2"/>
    <property type="match status" value="1"/>
</dbReference>
<dbReference type="InterPro" id="IPR041872">
    <property type="entry name" value="Anticodon_Met"/>
</dbReference>
<dbReference type="InterPro" id="IPR004495">
    <property type="entry name" value="Met-tRNA-synth_bsu_C"/>
</dbReference>
<dbReference type="InterPro" id="IPR014758">
    <property type="entry name" value="Met-tRNA_synth"/>
</dbReference>
<dbReference type="InterPro" id="IPR023457">
    <property type="entry name" value="Met-tRNA_synth_2"/>
</dbReference>
<dbReference type="InterPro" id="IPR015413">
    <property type="entry name" value="Methionyl/Leucyl_tRNA_Synth"/>
</dbReference>
<dbReference type="InterPro" id="IPR033911">
    <property type="entry name" value="MetRS_core"/>
</dbReference>
<dbReference type="InterPro" id="IPR012340">
    <property type="entry name" value="NA-bd_OB-fold"/>
</dbReference>
<dbReference type="InterPro" id="IPR014729">
    <property type="entry name" value="Rossmann-like_a/b/a_fold"/>
</dbReference>
<dbReference type="InterPro" id="IPR002547">
    <property type="entry name" value="tRNA-bd_dom"/>
</dbReference>
<dbReference type="InterPro" id="IPR009080">
    <property type="entry name" value="tRNAsynth_Ia_anticodon-bd"/>
</dbReference>
<dbReference type="NCBIfam" id="TIGR00398">
    <property type="entry name" value="metG"/>
    <property type="match status" value="1"/>
</dbReference>
<dbReference type="NCBIfam" id="TIGR00399">
    <property type="entry name" value="metG_C_term"/>
    <property type="match status" value="1"/>
</dbReference>
<dbReference type="NCBIfam" id="NF008900">
    <property type="entry name" value="PRK12267.1"/>
    <property type="match status" value="1"/>
</dbReference>
<dbReference type="PANTHER" id="PTHR43326:SF1">
    <property type="entry name" value="METHIONINE--TRNA LIGASE, MITOCHONDRIAL"/>
    <property type="match status" value="1"/>
</dbReference>
<dbReference type="PANTHER" id="PTHR43326">
    <property type="entry name" value="METHIONYL-TRNA SYNTHETASE"/>
    <property type="match status" value="1"/>
</dbReference>
<dbReference type="Pfam" id="PF19303">
    <property type="entry name" value="Anticodon_3"/>
    <property type="match status" value="1"/>
</dbReference>
<dbReference type="Pfam" id="PF09334">
    <property type="entry name" value="tRNA-synt_1g"/>
    <property type="match status" value="1"/>
</dbReference>
<dbReference type="Pfam" id="PF01588">
    <property type="entry name" value="tRNA_bind"/>
    <property type="match status" value="1"/>
</dbReference>
<dbReference type="PRINTS" id="PR01041">
    <property type="entry name" value="TRNASYNTHMET"/>
</dbReference>
<dbReference type="SUPFAM" id="SSF47323">
    <property type="entry name" value="Anticodon-binding domain of a subclass of class I aminoacyl-tRNA synthetases"/>
    <property type="match status" value="1"/>
</dbReference>
<dbReference type="SUPFAM" id="SSF50249">
    <property type="entry name" value="Nucleic acid-binding proteins"/>
    <property type="match status" value="1"/>
</dbReference>
<dbReference type="SUPFAM" id="SSF52374">
    <property type="entry name" value="Nucleotidylyl transferase"/>
    <property type="match status" value="1"/>
</dbReference>
<dbReference type="PROSITE" id="PS50886">
    <property type="entry name" value="TRBD"/>
    <property type="match status" value="1"/>
</dbReference>
<keyword id="KW-0030">Aminoacyl-tRNA synthetase</keyword>
<keyword id="KW-0067">ATP-binding</keyword>
<keyword id="KW-0963">Cytoplasm</keyword>
<keyword id="KW-0436">Ligase</keyword>
<keyword id="KW-0547">Nucleotide-binding</keyword>
<keyword id="KW-0648">Protein biosynthesis</keyword>
<keyword id="KW-1185">Reference proteome</keyword>
<keyword id="KW-0694">RNA-binding</keyword>
<keyword id="KW-0820">tRNA-binding</keyword>
<comment type="function">
    <text evidence="1">Is required not only for elongation of protein synthesis but also for the initiation of all mRNA translation through initiator tRNA(fMet) aminoacylation.</text>
</comment>
<comment type="catalytic activity">
    <reaction>
        <text>tRNA(Met) + L-methionine + ATP = L-methionyl-tRNA(Met) + AMP + diphosphate</text>
        <dbReference type="Rhea" id="RHEA:13481"/>
        <dbReference type="Rhea" id="RHEA-COMP:9667"/>
        <dbReference type="Rhea" id="RHEA-COMP:9698"/>
        <dbReference type="ChEBI" id="CHEBI:30616"/>
        <dbReference type="ChEBI" id="CHEBI:33019"/>
        <dbReference type="ChEBI" id="CHEBI:57844"/>
        <dbReference type="ChEBI" id="CHEBI:78442"/>
        <dbReference type="ChEBI" id="CHEBI:78530"/>
        <dbReference type="ChEBI" id="CHEBI:456215"/>
        <dbReference type="EC" id="6.1.1.10"/>
    </reaction>
</comment>
<comment type="subunit">
    <text evidence="1">Homodimer.</text>
</comment>
<comment type="subcellular location">
    <subcellularLocation>
        <location evidence="1">Cytoplasm</location>
    </subcellularLocation>
</comment>
<comment type="similarity">
    <text evidence="2">Belongs to the class-I aminoacyl-tRNA synthetase family. MetG type 2B subfamily.</text>
</comment>
<comment type="sequence caution" evidence="2">
    <conflict type="erroneous initiation">
        <sequence resource="EMBL-CDS" id="AAK99500"/>
    </conflict>
</comment>
<evidence type="ECO:0000250" key="1"/>
<evidence type="ECO:0000305" key="2"/>
<protein>
    <recommendedName>
        <fullName>Methionine--tRNA ligase</fullName>
        <ecNumber>6.1.1.10</ecNumber>
    </recommendedName>
    <alternativeName>
        <fullName>Methionyl-tRNA synthetase</fullName>
        <shortName>MetRS</shortName>
    </alternativeName>
</protein>
<sequence>MSEKNFYITTPIYYPSGKLHIGSAYTTIACDVLARYKRLMGYDVFYLTGLDEHGQKIQQKAEEAGITPQAYVDGMAVGVKELWQLLDISYDKFIRTTDDYHEKVVAQVFERLLAQDDIYLGEYSGWYSVSDEEFFTESQLAEVFRDEAGNVTGGIAPSGHEVEWVSEESYFLRLSKYQDRLVEFFKAHPEFITPDGRLNEMLRNFIEPGLEDLAVSRTTFTWGVPVPSNPKHVVYVWIDALLNYATALGYAQDEHGNFDKFWNGTVFHMVGKDILRFHSIYWPILLMMLDVKLPDRLIAHGWFVMKDGKMSKSKGNVVYPEMLVERYGLDPLRYYLMRNLPVGSDGTFTPEDYVGRINYELANDLGNLLNRTVSMINKYFDGQIPAYVEGVTEFDHVLAEVAEQSIADFHTHMEAVDYPRALEAVWTLISRTNKYIDETAPWVLAKDEALRDQLASVMSHLAASIRVVAHLIEPFMMETSRAVLTQLGLEEVSSLENLSLADFPADVTVVAKGTPIFPRLNMEEEIAYIKEQMEGNKPAVEKEWNPDEVELKLNKDEIKFEDFDKVEIRVAEVKEVSKVEGSDKLLQFRLDAGDGEDRQILSGIAKYYPNEQELVGKKVQIVANLKPRKMMKKYVSQGMILSAEHDGKLTLLTVDPAVPNGSVIG</sequence>
<gene>
    <name type="primary">metG</name>
    <name type="synonym">metS</name>
    <name type="ordered locus">spr0696</name>
</gene>
<name>SYM_STRR6</name>
<reference key="1">
    <citation type="journal article" date="2001" name="J. Bacteriol.">
        <title>Genome of the bacterium Streptococcus pneumoniae strain R6.</title>
        <authorList>
            <person name="Hoskins J."/>
            <person name="Alborn W.E. Jr."/>
            <person name="Arnold J."/>
            <person name="Blaszczak L.C."/>
            <person name="Burgett S."/>
            <person name="DeHoff B.S."/>
            <person name="Estrem S.T."/>
            <person name="Fritz L."/>
            <person name="Fu D.-J."/>
            <person name="Fuller W."/>
            <person name="Geringer C."/>
            <person name="Gilmour R."/>
            <person name="Glass J.S."/>
            <person name="Khoja H."/>
            <person name="Kraft A.R."/>
            <person name="Lagace R.E."/>
            <person name="LeBlanc D.J."/>
            <person name="Lee L.N."/>
            <person name="Lefkowitz E.J."/>
            <person name="Lu J."/>
            <person name="Matsushima P."/>
            <person name="McAhren S.M."/>
            <person name="McHenney M."/>
            <person name="McLeaster K."/>
            <person name="Mundy C.W."/>
            <person name="Nicas T.I."/>
            <person name="Norris F.H."/>
            <person name="O'Gara M."/>
            <person name="Peery R.B."/>
            <person name="Robertson G.T."/>
            <person name="Rockey P."/>
            <person name="Sun P.-M."/>
            <person name="Winkler M.E."/>
            <person name="Yang Y."/>
            <person name="Young-Bellido M."/>
            <person name="Zhao G."/>
            <person name="Zook C.A."/>
            <person name="Baltz R.H."/>
            <person name="Jaskunas S.R."/>
            <person name="Rosteck P.R. Jr."/>
            <person name="Skatrud P.L."/>
            <person name="Glass J.I."/>
        </authorList>
    </citation>
    <scope>NUCLEOTIDE SEQUENCE [LARGE SCALE GENOMIC DNA]</scope>
    <source>
        <strain>ATCC BAA-255 / R6</strain>
    </source>
</reference>